<keyword id="KW-1003">Cell membrane</keyword>
<keyword id="KW-0406">Ion transport</keyword>
<keyword id="KW-0472">Membrane</keyword>
<keyword id="KW-0630">Potassium</keyword>
<keyword id="KW-0633">Potassium transport</keyword>
<keyword id="KW-0769">Symport</keyword>
<keyword id="KW-0812">Transmembrane</keyword>
<keyword id="KW-1133">Transmembrane helix</keyword>
<keyword id="KW-0813">Transport</keyword>
<gene>
    <name evidence="1" type="primary">kup</name>
    <name type="ordered locus">cgR_0832</name>
</gene>
<protein>
    <recommendedName>
        <fullName evidence="1">Probable potassium transport system protein Kup</fullName>
    </recommendedName>
</protein>
<proteinExistence type="inferred from homology"/>
<accession>A4QC57</accession>
<dbReference type="EMBL" id="AP009044">
    <property type="protein sequence ID" value="BAF53804.1"/>
    <property type="molecule type" value="Genomic_DNA"/>
</dbReference>
<dbReference type="RefSeq" id="WP_011896886.1">
    <property type="nucleotide sequence ID" value="NC_009342.1"/>
</dbReference>
<dbReference type="KEGG" id="cgt:cgR_0832"/>
<dbReference type="HOGENOM" id="CLU_008142_4_2_11"/>
<dbReference type="PhylomeDB" id="A4QC57"/>
<dbReference type="Proteomes" id="UP000006698">
    <property type="component" value="Chromosome"/>
</dbReference>
<dbReference type="GO" id="GO:0005886">
    <property type="term" value="C:plasma membrane"/>
    <property type="evidence" value="ECO:0007669"/>
    <property type="project" value="UniProtKB-SubCell"/>
</dbReference>
<dbReference type="GO" id="GO:0015079">
    <property type="term" value="F:potassium ion transmembrane transporter activity"/>
    <property type="evidence" value="ECO:0007669"/>
    <property type="project" value="UniProtKB-UniRule"/>
</dbReference>
<dbReference type="GO" id="GO:0015293">
    <property type="term" value="F:symporter activity"/>
    <property type="evidence" value="ECO:0007669"/>
    <property type="project" value="UniProtKB-UniRule"/>
</dbReference>
<dbReference type="HAMAP" id="MF_01522">
    <property type="entry name" value="Kup"/>
    <property type="match status" value="1"/>
</dbReference>
<dbReference type="InterPro" id="IPR003855">
    <property type="entry name" value="K+_transporter"/>
</dbReference>
<dbReference type="InterPro" id="IPR053952">
    <property type="entry name" value="K_trans_C"/>
</dbReference>
<dbReference type="InterPro" id="IPR053951">
    <property type="entry name" value="K_trans_N"/>
</dbReference>
<dbReference type="InterPro" id="IPR023051">
    <property type="entry name" value="Kup"/>
</dbReference>
<dbReference type="PANTHER" id="PTHR30540:SF79">
    <property type="entry name" value="LOW AFFINITY POTASSIUM TRANSPORT SYSTEM PROTEIN KUP"/>
    <property type="match status" value="1"/>
</dbReference>
<dbReference type="PANTHER" id="PTHR30540">
    <property type="entry name" value="OSMOTIC STRESS POTASSIUM TRANSPORTER"/>
    <property type="match status" value="1"/>
</dbReference>
<dbReference type="Pfam" id="PF02705">
    <property type="entry name" value="K_trans"/>
    <property type="match status" value="1"/>
</dbReference>
<dbReference type="Pfam" id="PF22776">
    <property type="entry name" value="K_trans_C"/>
    <property type="match status" value="1"/>
</dbReference>
<evidence type="ECO:0000255" key="1">
    <source>
        <dbReference type="HAMAP-Rule" id="MF_01522"/>
    </source>
</evidence>
<organism>
    <name type="scientific">Corynebacterium glutamicum (strain R)</name>
    <dbReference type="NCBI Taxonomy" id="340322"/>
    <lineage>
        <taxon>Bacteria</taxon>
        <taxon>Bacillati</taxon>
        <taxon>Actinomycetota</taxon>
        <taxon>Actinomycetes</taxon>
        <taxon>Mycobacteriales</taxon>
        <taxon>Corynebacteriaceae</taxon>
        <taxon>Corynebacterium</taxon>
    </lineage>
</organism>
<sequence>MLNRMKSARPKSVAPKSGQALLTLGALGVVFGDIGTSPLYSLHTAFSMQHNKVEVTPENVYGIISMVLWTITLIVTVKYVMLVTRADNQGQGGILALVALLKNRGHWGKFVAVAGMLGAALFYGDVVITPAISVLSATEGLTVISPSFERFILPISLAVLIAIFAIQPLGTEKVGKAFGPIMLLWFVTLAGLGIPQIIVHPEILQSLSPHWALGLIVAEPFQAFVLLGAVVLTVTGAEALYADMGHFGARPIRVAWFCVVMPALILTYLGQGALVINQPEAVRNPMFYLAPEGLRIPLVILATIATVIASQAVISGAYSLTKQAVNLKLLPRMVIRHTSRKEEGQIYMPLVNGLLFVSVMVVVLVFRSSESLASAYGLAVTGTLVLVSVLYLIYVHTTWWKTALFIVFIGIPEVLLFASNTTKIHDGGWLPLLTAAVLIVVMRTWEWGSDRVNQERAELELPMDKFLEKLDQPHNIGLRKVAEVAVFPHGTSDTVPLSLVRCVKDLKLLYREIVIVRIVQEHVPHVPPAERAEMEVLHHAPIRVVRVDLHLGYFDEQNLPENLHAIDPTWDNATYFLSALTLRSRLPGKIAGWRDRLYLSMERNQASRTESFKLQPSKTITVGTELHL</sequence>
<reference key="1">
    <citation type="journal article" date="2007" name="Microbiology">
        <title>Comparative analysis of the Corynebacterium glutamicum group and complete genome sequence of strain R.</title>
        <authorList>
            <person name="Yukawa H."/>
            <person name="Omumasaba C.A."/>
            <person name="Nonaka H."/>
            <person name="Kos P."/>
            <person name="Okai N."/>
            <person name="Suzuki N."/>
            <person name="Suda M."/>
            <person name="Tsuge Y."/>
            <person name="Watanabe J."/>
            <person name="Ikeda Y."/>
            <person name="Vertes A.A."/>
            <person name="Inui M."/>
        </authorList>
    </citation>
    <scope>NUCLEOTIDE SEQUENCE [LARGE SCALE GENOMIC DNA]</scope>
    <source>
        <strain>R</strain>
    </source>
</reference>
<comment type="function">
    <text evidence="1">Transport of potassium into the cell. Likely operates as a K(+):H(+) symporter.</text>
</comment>
<comment type="catalytic activity">
    <reaction evidence="1">
        <text>K(+)(in) + H(+)(in) = K(+)(out) + H(+)(out)</text>
        <dbReference type="Rhea" id="RHEA:28490"/>
        <dbReference type="ChEBI" id="CHEBI:15378"/>
        <dbReference type="ChEBI" id="CHEBI:29103"/>
    </reaction>
    <physiologicalReaction direction="right-to-left" evidence="1">
        <dbReference type="Rhea" id="RHEA:28492"/>
    </physiologicalReaction>
</comment>
<comment type="subcellular location">
    <subcellularLocation>
        <location evidence="1">Cell membrane</location>
        <topology evidence="1">Multi-pass membrane protein</topology>
    </subcellularLocation>
</comment>
<comment type="similarity">
    <text evidence="1">Belongs to the HAK/KUP transporter (TC 2.A.72) family.</text>
</comment>
<name>KUP_CORGB</name>
<feature type="chain" id="PRO_0000296766" description="Probable potassium transport system protein Kup">
    <location>
        <begin position="1"/>
        <end position="628"/>
    </location>
</feature>
<feature type="transmembrane region" description="Helical" evidence="1">
    <location>
        <begin position="20"/>
        <end position="40"/>
    </location>
</feature>
<feature type="transmembrane region" description="Helical" evidence="1">
    <location>
        <begin position="63"/>
        <end position="83"/>
    </location>
</feature>
<feature type="transmembrane region" description="Helical" evidence="1">
    <location>
        <begin position="110"/>
        <end position="130"/>
    </location>
</feature>
<feature type="transmembrane region" description="Helical" evidence="1">
    <location>
        <begin position="151"/>
        <end position="171"/>
    </location>
</feature>
<feature type="transmembrane region" description="Helical" evidence="1">
    <location>
        <begin position="178"/>
        <end position="198"/>
    </location>
</feature>
<feature type="transmembrane region" description="Helical" evidence="1">
    <location>
        <begin position="212"/>
        <end position="232"/>
    </location>
</feature>
<feature type="transmembrane region" description="Helical" evidence="1">
    <location>
        <begin position="256"/>
        <end position="276"/>
    </location>
</feature>
<feature type="transmembrane region" description="Helical" evidence="1">
    <location>
        <begin position="296"/>
        <end position="316"/>
    </location>
</feature>
<feature type="transmembrane region" description="Helical" evidence="1">
    <location>
        <begin position="346"/>
        <end position="366"/>
    </location>
</feature>
<feature type="transmembrane region" description="Helical" evidence="1">
    <location>
        <begin position="375"/>
        <end position="395"/>
    </location>
</feature>
<feature type="transmembrane region" description="Helical" evidence="1">
    <location>
        <begin position="398"/>
        <end position="418"/>
    </location>
</feature>
<feature type="transmembrane region" description="Helical" evidence="1">
    <location>
        <begin position="422"/>
        <end position="442"/>
    </location>
</feature>